<name>PNX64_SCOMU</name>
<proteinExistence type="evidence at protein level"/>
<reference key="1">
    <citation type="journal article" date="2012" name="Mol. Cell. Proteomics">
        <title>Chemical punch packed in venoms makes centipedes excellent predators.</title>
        <authorList>
            <person name="Yang S."/>
            <person name="Liu Z."/>
            <person name="Xiao Y."/>
            <person name="Li Y."/>
            <person name="Rong M."/>
            <person name="Liang S."/>
            <person name="Zhang Z."/>
            <person name="Yu H."/>
            <person name="King G.F."/>
            <person name="Lai R."/>
        </authorList>
    </citation>
    <scope>NUCLEOTIDE SEQUENCE [MRNA]</scope>
    <scope>PROTEIN SEQUENCE OF 19-39</scope>
    <scope>SUBCELLULAR LOCATION</scope>
    <source>
        <tissue>Venom</tissue>
        <tissue>Venom gland</tissue>
    </source>
</reference>
<evidence type="ECO:0000269" key="1">
    <source>
    </source>
</evidence>
<evidence type="ECO:0000303" key="2">
    <source>
    </source>
</evidence>
<evidence type="ECO:0000305" key="3"/>
<evidence type="ECO:0000305" key="4">
    <source>
    </source>
</evidence>
<evidence type="ECO:0000312" key="5">
    <source>
        <dbReference type="EMBL" id="AFM55024.1"/>
    </source>
</evidence>
<keyword id="KW-0903">Direct protein sequencing</keyword>
<keyword id="KW-1015">Disulfide bond</keyword>
<keyword id="KW-0528">Neurotoxin</keyword>
<keyword id="KW-0964">Secreted</keyword>
<keyword id="KW-0732">Signal</keyword>
<keyword id="KW-0800">Toxin</keyword>
<organism>
    <name type="scientific">Scolopendra mutilans</name>
    <name type="common">Chinese red-headed centipede</name>
    <name type="synonym">Scolopendra subspinipes mutilans</name>
    <dbReference type="NCBI Taxonomy" id="2836329"/>
    <lineage>
        <taxon>Eukaryota</taxon>
        <taxon>Metazoa</taxon>
        <taxon>Ecdysozoa</taxon>
        <taxon>Arthropoda</taxon>
        <taxon>Myriapoda</taxon>
        <taxon>Chilopoda</taxon>
        <taxon>Pleurostigmophora</taxon>
        <taxon>Scolopendromorpha</taxon>
        <taxon>Scolopendridae</taxon>
        <taxon>Scolopendra</taxon>
    </lineage>
</organism>
<protein>
    <recommendedName>
        <fullName evidence="2">Putative neurotoxin 4</fullName>
    </recommendedName>
    <alternativeName>
        <fullName evidence="5">Putative neurotoxin 5</fullName>
    </alternativeName>
</protein>
<feature type="signal peptide" evidence="1">
    <location>
        <begin position="1"/>
        <end position="18"/>
    </location>
</feature>
<feature type="chain" id="PRO_0000425492" description="Putative neurotoxin 4" evidence="4">
    <location>
        <begin position="19"/>
        <end position="64"/>
    </location>
</feature>
<comment type="subcellular location">
    <subcellularLocation>
        <location evidence="1">Secreted</location>
    </subcellularLocation>
</comment>
<comment type="tissue specificity">
    <text evidence="4">Expressed by the venom gland.</text>
</comment>
<comment type="PTM">
    <text evidence="3">Contains 3 disulfide bonds.</text>
</comment>
<comment type="similarity">
    <text evidence="3">Belongs to the scolopendra neurotoxin 6 family.</text>
</comment>
<accession>I6RA76</accession>
<dbReference type="EMBL" id="JQ757077">
    <property type="protein sequence ID" value="AFM55024.1"/>
    <property type="molecule type" value="mRNA"/>
</dbReference>
<dbReference type="GO" id="GO:0005576">
    <property type="term" value="C:extracellular region"/>
    <property type="evidence" value="ECO:0007669"/>
    <property type="project" value="UniProtKB-SubCell"/>
</dbReference>
<dbReference type="GO" id="GO:0090729">
    <property type="term" value="F:toxin activity"/>
    <property type="evidence" value="ECO:0007669"/>
    <property type="project" value="UniProtKB-KW"/>
</dbReference>
<sequence>MKSKFAVLFFTLFLLALAIDNVTTICPPGCICNRQSVGLTCKPSPGSDMSARECLKKTCSYGYC</sequence>